<sequence length="327" mass="37394">GFKFTFFVSIMIYWHVVGEPKEKGQLYNLPAEIPCPTLAPPTPPSHGPAPGNIFFLETSDRTNPNFLFMCSVESAARTHPESHVLVLMKGLPGGNASLPRHLGISLLSCFPNVQMLPLDLRELFRDTPLADWYAAVQGRWEPYLLPVLSDASRIALMWKFGGIYLDTDFIVLKNLRNLTNVLGTQSRYVLNGAFLAFERXHEFMALCMXDFVDHYNGWIWGHQGPQLLTRVFKKWCSIRSLAESRACRGVTTLPPEAFYPIPWQDWKKYFEDINPEELPRLFSATYAVHVWNKKSQGTRFEATSRALLAQLHARYCPTTHEAMKMYL</sequence>
<keyword id="KW-0328">Glycosyltransferase</keyword>
<keyword id="KW-0333">Golgi apparatus</keyword>
<keyword id="KW-0444">Lipid biosynthesis</keyword>
<keyword id="KW-0443">Lipid metabolism</keyword>
<keyword id="KW-0472">Membrane</keyword>
<keyword id="KW-1185">Reference proteome</keyword>
<keyword id="KW-0808">Transferase</keyword>
<reference key="1">
    <citation type="journal article" date="2004" name="Mol. Biol. Evol.">
        <title>Human-specific amino acid changes found in 103 protein-coding genes.</title>
        <authorList>
            <person name="Kitano T."/>
            <person name="Liu Y.-H."/>
            <person name="Ueda S."/>
            <person name="Saitou N."/>
        </authorList>
    </citation>
    <scope>NUCLEOTIDE SEQUENCE [GENOMIC DNA]</scope>
</reference>
<accession>Q9N290</accession>
<feature type="chain" id="PRO_0000080577" description="Lactosylceramide 4-alpha-galactosyltransferase">
    <location>
        <begin position="1" status="less than"/>
        <end position="327"/>
    </location>
</feature>
<feature type="short sequence motif" description="DXD motif" evidence="1">
    <location>
        <begin position="166"/>
        <end position="168"/>
    </location>
</feature>
<feature type="non-terminal residue">
    <location>
        <position position="1"/>
    </location>
</feature>
<dbReference type="EC" id="2.4.1.228" evidence="2"/>
<dbReference type="EMBL" id="AB041420">
    <property type="protein sequence ID" value="BAA94505.1"/>
    <property type="molecule type" value="Genomic_DNA"/>
</dbReference>
<dbReference type="STRING" id="9593.ENSGGOP00000009135"/>
<dbReference type="eggNOG" id="KOG1928">
    <property type="taxonomic scope" value="Eukaryota"/>
</dbReference>
<dbReference type="InParanoid" id="Q9N290"/>
<dbReference type="Proteomes" id="UP000001519">
    <property type="component" value="Unplaced"/>
</dbReference>
<dbReference type="GO" id="GO:0000139">
    <property type="term" value="C:Golgi membrane"/>
    <property type="evidence" value="ECO:0007669"/>
    <property type="project" value="UniProtKB-SubCell"/>
</dbReference>
<dbReference type="GO" id="GO:0008378">
    <property type="term" value="F:galactosyltransferase activity"/>
    <property type="evidence" value="ECO:0000250"/>
    <property type="project" value="UniProtKB"/>
</dbReference>
<dbReference type="GO" id="GO:0050512">
    <property type="term" value="F:lactosylceramide 4-alpha-galactosyltransferase activity"/>
    <property type="evidence" value="ECO:0007669"/>
    <property type="project" value="UniProtKB-EC"/>
</dbReference>
<dbReference type="GO" id="GO:0006688">
    <property type="term" value="P:glycosphingolipid biosynthetic process"/>
    <property type="evidence" value="ECO:0000318"/>
    <property type="project" value="GO_Central"/>
</dbReference>
<dbReference type="FunFam" id="3.90.550.20:FF:000003">
    <property type="entry name" value="Lactosylceramide 4-alpha-galactosyltransferase"/>
    <property type="match status" value="1"/>
</dbReference>
<dbReference type="Gene3D" id="3.90.550.20">
    <property type="match status" value="1"/>
</dbReference>
<dbReference type="InterPro" id="IPR007652">
    <property type="entry name" value="A1-4-GlycosylTfrase_dom"/>
</dbReference>
<dbReference type="InterPro" id="IPR051981">
    <property type="entry name" value="Glycosyltransf_32"/>
</dbReference>
<dbReference type="InterPro" id="IPR007577">
    <property type="entry name" value="GlycoTrfase_DXD_sugar-bd_CS"/>
</dbReference>
<dbReference type="InterPro" id="IPR029044">
    <property type="entry name" value="Nucleotide-diphossugar_trans"/>
</dbReference>
<dbReference type="PANTHER" id="PTHR12042:SF17">
    <property type="entry name" value="LACTOSYLCERAMIDE 4-ALPHA-GALACTOSYLTRANSFERASE"/>
    <property type="match status" value="1"/>
</dbReference>
<dbReference type="PANTHER" id="PTHR12042">
    <property type="entry name" value="LACTOSYLCERAMIDE 4-ALPHA-GALACTOSYLTRANSFERASE ALPHA- 1,4-GALACTOSYLTRANSFERASE"/>
    <property type="match status" value="1"/>
</dbReference>
<dbReference type="Pfam" id="PF04572">
    <property type="entry name" value="Gb3_synth"/>
    <property type="match status" value="1"/>
</dbReference>
<dbReference type="Pfam" id="PF04488">
    <property type="entry name" value="Gly_transf_sug"/>
    <property type="match status" value="1"/>
</dbReference>
<dbReference type="SUPFAM" id="SSF53448">
    <property type="entry name" value="Nucleotide-diphospho-sugar transferases"/>
    <property type="match status" value="1"/>
</dbReference>
<evidence type="ECO:0000250" key="1"/>
<evidence type="ECO:0000250" key="2">
    <source>
        <dbReference type="UniProtKB" id="Q9NPC4"/>
    </source>
</evidence>
<evidence type="ECO:0000305" key="3"/>
<gene>
    <name type="primary">A4GALT</name>
    <name type="synonym">A14GALT</name>
    <name type="synonym">A4GALT1</name>
</gene>
<name>A4GAT_GORGO</name>
<protein>
    <recommendedName>
        <fullName>Lactosylceramide 4-alpha-galactosyltransferase</fullName>
        <ecNumber evidence="2">2.4.1.228</ecNumber>
    </recommendedName>
    <alternativeName>
        <fullName>Alpha-1,4-N-acetylglucosaminyltransferase</fullName>
    </alternativeName>
    <alternativeName>
        <fullName>Alpha-1,4-galactosyltransferase</fullName>
    </alternativeName>
    <alternativeName>
        <fullName>Globotriaosylceramide synthase</fullName>
        <shortName>Gb3 synthase</shortName>
    </alternativeName>
    <alternativeName>
        <fullName>UDP-galactose:beta-D-galactosyl-beta1-R 4-alpha-D-galactosyltransferase</fullName>
    </alternativeName>
</protein>
<organism>
    <name type="scientific">Gorilla gorilla gorilla</name>
    <name type="common">Western lowland gorilla</name>
    <dbReference type="NCBI Taxonomy" id="9595"/>
    <lineage>
        <taxon>Eukaryota</taxon>
        <taxon>Metazoa</taxon>
        <taxon>Chordata</taxon>
        <taxon>Craniata</taxon>
        <taxon>Vertebrata</taxon>
        <taxon>Euteleostomi</taxon>
        <taxon>Mammalia</taxon>
        <taxon>Eutheria</taxon>
        <taxon>Euarchontoglires</taxon>
        <taxon>Primates</taxon>
        <taxon>Haplorrhini</taxon>
        <taxon>Catarrhini</taxon>
        <taxon>Hominidae</taxon>
        <taxon>Gorilla</taxon>
    </lineage>
</organism>
<comment type="function">
    <text evidence="2">Catalyzes the transfer of galactose from UDP-alpha-D-galactose to lactosylceramide/beta-D-galactosyl-(1-&gt;4)-beta-D-glucosyl-(1&lt;-&gt;1)-ceramide(d18:1(4E)) to produce globotriaosylceramide/globoside Gb3Cer (d18:1(4E)). Also able to transfer galactose to galactosylceramide/beta-D-Gal-(1&lt;-&gt;1')-Cer. Globoside Gb3Cer is a glycosphingolipid of the globo serie, one of the major types of neutral root structures of glycosphingolipids, that constitute a significant portion of mammalian cell membranes.</text>
</comment>
<comment type="catalytic activity">
    <reaction evidence="2">
        <text>a beta-D-Gal-(1-&gt;4)-beta-D-Glc-(1&lt;-&gt;1)-Cer(d18:1(4E)) + UDP-alpha-D-galactose = a globoside Gb3Cer (d18:1(4E)) + UDP + H(+)</text>
        <dbReference type="Rhea" id="RHEA:11924"/>
        <dbReference type="ChEBI" id="CHEBI:15378"/>
        <dbReference type="ChEBI" id="CHEBI:17950"/>
        <dbReference type="ChEBI" id="CHEBI:18313"/>
        <dbReference type="ChEBI" id="CHEBI:58223"/>
        <dbReference type="ChEBI" id="CHEBI:66914"/>
        <dbReference type="EC" id="2.4.1.228"/>
    </reaction>
    <physiologicalReaction direction="left-to-right" evidence="2">
        <dbReference type="Rhea" id="RHEA:11925"/>
    </physiologicalReaction>
</comment>
<comment type="catalytic activity">
    <reaction evidence="2">
        <text>a beta-D-Gal-(1&lt;-&gt;1')-ceramide + UDP-alpha-D-galactose = alpha-D-Gal-(1-&gt;4)-beta-D-Gal-(1&lt;-&gt;1')-Cer + UDP + H(+)</text>
        <dbReference type="Rhea" id="RHEA:60044"/>
        <dbReference type="ChEBI" id="CHEBI:15378"/>
        <dbReference type="ChEBI" id="CHEBI:58223"/>
        <dbReference type="ChEBI" id="CHEBI:66914"/>
        <dbReference type="ChEBI" id="CHEBI:143593"/>
        <dbReference type="ChEBI" id="CHEBI:143594"/>
    </reaction>
    <physiologicalReaction direction="left-to-right" evidence="2">
        <dbReference type="Rhea" id="RHEA:60045"/>
    </physiologicalReaction>
</comment>
<comment type="pathway">
    <text evidence="2">Glycolipid biosynthesis.</text>
</comment>
<comment type="subcellular location">
    <subcellularLocation>
        <location evidence="3">Golgi apparatus membrane</location>
        <topology evidence="3">Single-pass type II membrane protein</topology>
    </subcellularLocation>
</comment>
<comment type="domain">
    <text evidence="1">The conserved DXD motif is involved in enzyme activity.</text>
</comment>
<comment type="similarity">
    <text evidence="3">Belongs to the glycosyltransferase 32 family.</text>
</comment>
<proteinExistence type="inferred from homology"/>